<comment type="function">
    <text evidence="5 7 8 10 11 12">Probable histone demethylase that promotes flowering independently of the photoperiod and vernalization pathways by repressing FLOWERING LOCUS C (FLC), a floral repressor that blocks the transition from vegetative to reproductive development. Probably mediates histone H3 'Lys-4' demethylation at FLC locus. Seems to act in partial redundancy with LDL1 and LDL2 to repress FLC expression. Required for histone H4 deacetylation of FLC locus. May be a component of the histone deacetylase complex. Forms a histone deacetylase complex with HDA5, HDA6 and MSI4/FVE that represses FLC gene expression to control flowering time (PubMed:21398257, PubMed:25922987). Required for systemic acquired resistance (SAR) toward pathogenic bacteria (e.g. Pseudomonas syringae pv tomato DC3000 (avrPto)) (PubMed:32392578). Together with FLD and MSI4/FVE, contributes to dehydroabietinal-dependent (DA, a diterpenoid tricyclic diterpene) activation of flowering ans SAR (PubMed:32392578).</text>
</comment>
<comment type="cofactor">
    <cofactor evidence="16">
        <name>FAD</name>
        <dbReference type="ChEBI" id="CHEBI:57692"/>
    </cofactor>
</comment>
<comment type="subunit">
    <text evidence="10">Interacts with HDA6.</text>
</comment>
<comment type="induction">
    <text evidence="12">Induced by dehydroabietinal-dependent (DA), a diterpenoid tricyclic diterpene that promotes flowering and systemic acquired resistance (SAR).</text>
</comment>
<comment type="PTM">
    <text evidence="9">Sumoylated at Lys-287, Lys-693 and Lys-770 by SIZ1. Sumoylation alters its activity and the histone H4 acetylation status of FLC locus, promoting FLC expression.</text>
</comment>
<comment type="disruption phenotype">
    <text evidence="12">Delayed flowering (PubMed:32392578). Impaired systemic acquired resistance (SAR) toward pathogenic bacteria (e.g. Pseudomonas syringae pv tomato DC3000 (avrPto)) (PubMed:32392578). Lost ability of dehydroabietinal-dependent (DA, a diterpenoid tricyclic diterpene) to trigger flowering and systemic acquired resistance (SAR) (PubMed:32392578).</text>
</comment>
<comment type="similarity">
    <text evidence="16">Belongs to the flavin monoamine oxidase family.</text>
</comment>
<comment type="sequence caution" evidence="16">
    <conflict type="erroneous initiation">
        <sequence resource="EMBL-CDS" id="AAF02805"/>
    </conflict>
    <text>Extended N-terminus.</text>
</comment>
<comment type="sequence caution" evidence="16">
    <conflict type="erroneous gene model prediction">
        <sequence resource="EMBL-CDS" id="AEE74899"/>
    </conflict>
</comment>
<evidence type="ECO:0000250" key="1"/>
<evidence type="ECO:0000250" key="2">
    <source>
        <dbReference type="UniProtKB" id="O60341"/>
    </source>
</evidence>
<evidence type="ECO:0000255" key="3">
    <source>
        <dbReference type="PROSITE-ProRule" id="PRU00247"/>
    </source>
</evidence>
<evidence type="ECO:0000256" key="4">
    <source>
        <dbReference type="SAM" id="MobiDB-lite"/>
    </source>
</evidence>
<evidence type="ECO:0000269" key="5">
    <source>
    </source>
</evidence>
<evidence type="ECO:0000269" key="6">
    <source>
    </source>
</evidence>
<evidence type="ECO:0000269" key="7">
    <source>
    </source>
</evidence>
<evidence type="ECO:0000269" key="8">
    <source>
    </source>
</evidence>
<evidence type="ECO:0000269" key="9">
    <source>
    </source>
</evidence>
<evidence type="ECO:0000269" key="10">
    <source>
    </source>
</evidence>
<evidence type="ECO:0000269" key="11">
    <source>
    </source>
</evidence>
<evidence type="ECO:0000269" key="12">
    <source>
    </source>
</evidence>
<evidence type="ECO:0000303" key="13">
    <source>
    </source>
</evidence>
<evidence type="ECO:0000303" key="14">
    <source>
    </source>
</evidence>
<evidence type="ECO:0000303" key="15">
    <source>
    </source>
</evidence>
<evidence type="ECO:0000305" key="16"/>
<evidence type="ECO:0000312" key="17">
    <source>
        <dbReference type="Araport" id="AT3G10390"/>
    </source>
</evidence>
<evidence type="ECO:0000312" key="18">
    <source>
        <dbReference type="EMBL" id="AAF02805.1"/>
    </source>
</evidence>
<evidence type="ECO:0000312" key="19">
    <source>
        <dbReference type="EMBL" id="AAG51395.1"/>
    </source>
</evidence>
<name>FLD_ARATH</name>
<accession>Q9CAE3</accession>
<accession>F4J3R3</accession>
<accession>Q58T18</accession>
<accession>Q9SS50</accession>
<sequence>MVSFSAPKKRRRGRSQRSMSSLNSLPVPNVGLLPGNSNFVSSSASSSGRFNVEVVNGSNQTVKSYPGIGDEIITINKEATTEALLALTAGFPADSLTEEEIEFGVVPIVGGIEQVNYILIRNHIISKWRENISSWVTKEMFLNSIPKHCSSLLDSAYNYLVTHGYINFGIAQAIKDKFPAQSSKSSVIIVGAGLSGLAAARQLMRFGFKVTVLEGRKRPGGRVYTKKMEANRVGAAADLGGSVLTGTLGNPLGIIARQLGSSLYKVRDKCPLYRVDGKPVDPDVDIKVEVAFNQLLDKASKLRQLMGDVSMDVSLGAALETFRQVSGNDVATEEMGLFNWHLANLEYANAGLVSKLSLAFWDQDDPYDMGGDHCFLPGGNGRLVQALAENVPILYEKTVQTIRYGSNGVKVTAGNQVYEGDMVLCTVPLGVLKNGSIKFVPELPQRKLDCIKRLGFGLLNKVAMLFPYVFWSTDLDTFGHLTEDPNYRGEFFLFYSYAPVAGGALLIALVAGEAAHKFETMPPTDAVTRVLHILRGIYEPQGINVPDPLQTVCTRWGGDPFSLGSYSNVAVGASGDDYDILAESVGDGRLFFAGEATTRRYPATMHGAFVTGLREAANMAQSAKARGIRKRIDRNPSRNAHSCAILLADLFRDPDLEFGSFCIIFSRRNPDPKSPAILRVTLSEPRKRNEDPKADQHSNKILFQQLQSHFNQQQQIQVYTLLTRQQALDLREVRGGDEKRLYYLCETLGVKLVGRKGLGVGADSVIASIKAERTGRKLPSSSTSGTKSG</sequence>
<proteinExistence type="evidence at protein level"/>
<reference key="1">
    <citation type="journal article" date="2005" name="Genetics">
        <title>FRIGIDA-independent variation in flowering time of natural Arabidopsis thaliana accessions.</title>
        <authorList>
            <person name="Werner J.D."/>
            <person name="Borevitz J.O."/>
            <person name="Uhlenhaut N.H."/>
            <person name="Ecker J.R."/>
            <person name="Chory J."/>
            <person name="Weigel D."/>
        </authorList>
    </citation>
    <scope>NUCLEOTIDE SEQUENCE [GENOMIC DNA]</scope>
    <scope>VARIANTS THR-640 AND LEU-686</scope>
    <source>
        <strain>cv. Landsberg erecta</strain>
        <strain>cv. Lz-0</strain>
    </source>
</reference>
<reference key="2">
    <citation type="journal article" date="2000" name="Nature">
        <title>Sequence and analysis of chromosome 3 of the plant Arabidopsis thaliana.</title>
        <authorList>
            <person name="Salanoubat M."/>
            <person name="Lemcke K."/>
            <person name="Rieger M."/>
            <person name="Ansorge W."/>
            <person name="Unseld M."/>
            <person name="Fartmann B."/>
            <person name="Valle G."/>
            <person name="Bloecker H."/>
            <person name="Perez-Alonso M."/>
            <person name="Obermaier B."/>
            <person name="Delseny M."/>
            <person name="Boutry M."/>
            <person name="Grivell L.A."/>
            <person name="Mache R."/>
            <person name="Puigdomenech P."/>
            <person name="De Simone V."/>
            <person name="Choisne N."/>
            <person name="Artiguenave F."/>
            <person name="Robert C."/>
            <person name="Brottier P."/>
            <person name="Wincker P."/>
            <person name="Cattolico L."/>
            <person name="Weissenbach J."/>
            <person name="Saurin W."/>
            <person name="Quetier F."/>
            <person name="Schaefer M."/>
            <person name="Mueller-Auer S."/>
            <person name="Gabel C."/>
            <person name="Fuchs M."/>
            <person name="Benes V."/>
            <person name="Wurmbach E."/>
            <person name="Drzonek H."/>
            <person name="Erfle H."/>
            <person name="Jordan N."/>
            <person name="Bangert S."/>
            <person name="Wiedelmann R."/>
            <person name="Kranz H."/>
            <person name="Voss H."/>
            <person name="Holland R."/>
            <person name="Brandt P."/>
            <person name="Nyakatura G."/>
            <person name="Vezzi A."/>
            <person name="D'Angelo M."/>
            <person name="Pallavicini A."/>
            <person name="Toppo S."/>
            <person name="Simionati B."/>
            <person name="Conrad A."/>
            <person name="Hornischer K."/>
            <person name="Kauer G."/>
            <person name="Loehnert T.-H."/>
            <person name="Nordsiek G."/>
            <person name="Reichelt J."/>
            <person name="Scharfe M."/>
            <person name="Schoen O."/>
            <person name="Bargues M."/>
            <person name="Terol J."/>
            <person name="Climent J."/>
            <person name="Navarro P."/>
            <person name="Collado C."/>
            <person name="Perez-Perez A."/>
            <person name="Ottenwaelder B."/>
            <person name="Duchemin D."/>
            <person name="Cooke R."/>
            <person name="Laudie M."/>
            <person name="Berger-Llauro C."/>
            <person name="Purnelle B."/>
            <person name="Masuy D."/>
            <person name="de Haan M."/>
            <person name="Maarse A.C."/>
            <person name="Alcaraz J.-P."/>
            <person name="Cottet A."/>
            <person name="Casacuberta E."/>
            <person name="Monfort A."/>
            <person name="Argiriou A."/>
            <person name="Flores M."/>
            <person name="Liguori R."/>
            <person name="Vitale D."/>
            <person name="Mannhaupt G."/>
            <person name="Haase D."/>
            <person name="Schoof H."/>
            <person name="Rudd S."/>
            <person name="Zaccaria P."/>
            <person name="Mewes H.-W."/>
            <person name="Mayer K.F.X."/>
            <person name="Kaul S."/>
            <person name="Town C.D."/>
            <person name="Koo H.L."/>
            <person name="Tallon L.J."/>
            <person name="Jenkins J."/>
            <person name="Rooney T."/>
            <person name="Rizzo M."/>
            <person name="Walts A."/>
            <person name="Utterback T."/>
            <person name="Fujii C.Y."/>
            <person name="Shea T.P."/>
            <person name="Creasy T.H."/>
            <person name="Haas B."/>
            <person name="Maiti R."/>
            <person name="Wu D."/>
            <person name="Peterson J."/>
            <person name="Van Aken S."/>
            <person name="Pai G."/>
            <person name="Militscher J."/>
            <person name="Sellers P."/>
            <person name="Gill J.E."/>
            <person name="Feldblyum T.V."/>
            <person name="Preuss D."/>
            <person name="Lin X."/>
            <person name="Nierman W.C."/>
            <person name="Salzberg S.L."/>
            <person name="White O."/>
            <person name="Venter J.C."/>
            <person name="Fraser C.M."/>
            <person name="Kaneko T."/>
            <person name="Nakamura Y."/>
            <person name="Sato S."/>
            <person name="Kato T."/>
            <person name="Asamizu E."/>
            <person name="Sasamoto S."/>
            <person name="Kimura T."/>
            <person name="Idesawa K."/>
            <person name="Kawashima K."/>
            <person name="Kishida Y."/>
            <person name="Kiyokawa C."/>
            <person name="Kohara M."/>
            <person name="Matsumoto M."/>
            <person name="Matsuno A."/>
            <person name="Muraki A."/>
            <person name="Nakayama S."/>
            <person name="Nakazaki N."/>
            <person name="Shinpo S."/>
            <person name="Takeuchi C."/>
            <person name="Wada T."/>
            <person name="Watanabe A."/>
            <person name="Yamada M."/>
            <person name="Yasuda M."/>
            <person name="Tabata S."/>
        </authorList>
    </citation>
    <scope>NUCLEOTIDE SEQUENCE [LARGE SCALE GENOMIC DNA]</scope>
    <source>
        <strain>cv. Columbia</strain>
    </source>
</reference>
<reference key="3">
    <citation type="journal article" date="2017" name="Plant J.">
        <title>Araport11: a complete reannotation of the Arabidopsis thaliana reference genome.</title>
        <authorList>
            <person name="Cheng C.Y."/>
            <person name="Krishnakumar V."/>
            <person name="Chan A.P."/>
            <person name="Thibaud-Nissen F."/>
            <person name="Schobel S."/>
            <person name="Town C.D."/>
        </authorList>
    </citation>
    <scope>GENOME REANNOTATION</scope>
    <source>
        <strain>cv. Columbia</strain>
    </source>
</reference>
<reference key="4">
    <citation type="journal article" date="2003" name="Science">
        <title>Regulation of flowering time by histone acetylation in Arabidopsis.</title>
        <authorList>
            <person name="He Y."/>
            <person name="Michaels S.D."/>
            <person name="Amasino R.M."/>
        </authorList>
    </citation>
    <scope>FUNCTION</scope>
</reference>
<reference key="5">
    <citation type="journal article" date="2007" name="Mol. Cell">
        <title>The Arabidopsis RNA-binding protein FCA requires a lysine-specific demethylase 1 homolog to downregulate FLC.</title>
        <authorList>
            <person name="Liu F."/>
            <person name="Quesada V."/>
            <person name="Crevillen P."/>
            <person name="Baeurle I."/>
            <person name="Swiezewski S."/>
            <person name="Dean C."/>
        </authorList>
    </citation>
    <scope>FUNCTION</scope>
    <scope>MUTAGENESIS OF PRO-428</scope>
</reference>
<reference key="6">
    <citation type="journal article" date="2007" name="Plant Cell">
        <title>Arabidopsis relatives of the human lysine-specific demethylase1 repress the expression of FWA and FLOWERING LOCUS C and thus promote the floral transition.</title>
        <authorList>
            <person name="Jiang D."/>
            <person name="Yang W."/>
            <person name="He Y."/>
            <person name="Amasino R.M."/>
        </authorList>
    </citation>
    <scope>FUNCTION</scope>
</reference>
<reference key="7">
    <citation type="journal article" date="2008" name="Plant J.">
        <title>The SUMO E3 ligase, AtSIZ1, regulates flowering by controlling a salicylic acid-mediated floral promotion pathway and through affects on FLC chromatin structure.</title>
        <authorList>
            <person name="Jin J.B."/>
            <person name="Jin Y.H."/>
            <person name="Lee J."/>
            <person name="Miura K."/>
            <person name="Yoo C.Y."/>
            <person name="Kim W.Y."/>
            <person name="Van Oosten M."/>
            <person name="Hyun Y."/>
            <person name="Somers D.E."/>
            <person name="Lee I."/>
            <person name="Yun D.J."/>
            <person name="Bressan R.A."/>
            <person name="Hasegawa P.M."/>
        </authorList>
    </citation>
    <scope>SUMOYLATION AT LYS-287; LYS-693 AND LYS-770</scope>
    <scope>MUTAGENESIS OF LYS-287; LYS-693 AND LYS-770</scope>
</reference>
<reference key="8">
    <citation type="journal article" date="2011" name="Plant Physiol.">
        <title>HISTONE DEACETYLASE6 interacts with FLOWERING LOCUS D and regulates flowering in Arabidopsis.</title>
        <authorList>
            <person name="Yu C.-W."/>
            <person name="Liu X."/>
            <person name="Luo M."/>
            <person name="Chen C."/>
            <person name="Lin X."/>
            <person name="Tian G."/>
            <person name="Lu Q."/>
            <person name="Cui Y."/>
            <person name="Wu K."/>
        </authorList>
    </citation>
    <scope>FUNCTION</scope>
    <scope>INTERACTION WITH HDA6</scope>
</reference>
<reference key="9">
    <citation type="journal article" date="2015" name="Plant J.">
        <title>Regulation of flowering time by the histone deacetylase HDA5 in Arabidopsis.</title>
        <authorList>
            <person name="Luo M."/>
            <person name="Tai R."/>
            <person name="Yu C.W."/>
            <person name="Yang S."/>
            <person name="Chen C.Y."/>
            <person name="Lin W.D."/>
            <person name="Schmidt W."/>
            <person name="Wu K."/>
        </authorList>
    </citation>
    <scope>FUNCTION</scope>
</reference>
<reference key="10">
    <citation type="journal article" date="2020" name="J. Exp. Bot.">
        <title>Dehydroabietinal promotes flowering time and plant defense in Arabidopsis via the autonomous pathway genes FLOWERING LOCUS D, FVE, and RELATIVE OF EARLY FLOWERING 6.</title>
        <authorList>
            <person name="Chowdhury Z."/>
            <person name="Mohanty D."/>
            <person name="Giri M.K."/>
            <person name="Venables B.J."/>
            <person name="Chaturvedi R."/>
            <person name="Chao A."/>
            <person name="Petros R.A."/>
            <person name="Shah J."/>
        </authorList>
    </citation>
    <scope>FUNCTION</scope>
    <scope>DISRUPTION PHENOTYPE</scope>
    <scope>INDUCTION BY DEHYDROABIETINAL</scope>
    <source>
        <strain>cv. Columbia</strain>
        <strain>cv. Landsberg erecta</strain>
        <strain>cv. No-0</strain>
        <strain>cv. Wassilewskija</strain>
    </source>
</reference>
<feature type="chain" id="PRO_0000342895" description="Protein FLOWERING LOCUS D">
    <location>
        <begin position="1"/>
        <end position="789"/>
    </location>
</feature>
<feature type="domain" description="SWIRM" evidence="3">
    <location>
        <begin position="76"/>
        <end position="177"/>
    </location>
</feature>
<feature type="region of interest" description="Disordered" evidence="4">
    <location>
        <begin position="1"/>
        <end position="23"/>
    </location>
</feature>
<feature type="binding site" evidence="2">
    <location>
        <position position="195"/>
    </location>
    <ligand>
        <name>FAD</name>
        <dbReference type="ChEBI" id="CHEBI:57692"/>
    </ligand>
</feature>
<feature type="binding site" evidence="2">
    <location>
        <position position="214"/>
    </location>
    <ligand>
        <name>FAD</name>
        <dbReference type="ChEBI" id="CHEBI:57692"/>
    </ligand>
</feature>
<feature type="binding site" evidence="2">
    <location>
        <position position="216"/>
    </location>
    <ligand>
        <name>FAD</name>
        <dbReference type="ChEBI" id="CHEBI:57692"/>
    </ligand>
</feature>
<feature type="binding site" evidence="2">
    <location>
        <position position="222"/>
    </location>
    <ligand>
        <name>FAD</name>
        <dbReference type="ChEBI" id="CHEBI:57692"/>
    </ligand>
</feature>
<feature type="binding site" evidence="2">
    <location>
        <begin position="240"/>
        <end position="243"/>
    </location>
    <ligand>
        <name>FAD</name>
        <dbReference type="ChEBI" id="CHEBI:57692"/>
    </ligand>
</feature>
<feature type="binding site" evidence="2">
    <location>
        <position position="595"/>
    </location>
    <ligand>
        <name>FAD</name>
        <dbReference type="ChEBI" id="CHEBI:57692"/>
    </ligand>
</feature>
<feature type="binding site" evidence="2">
    <location>
        <begin position="604"/>
        <end position="605"/>
    </location>
    <ligand>
        <name>FAD</name>
        <dbReference type="ChEBI" id="CHEBI:57692"/>
    </ligand>
</feature>
<feature type="binding site" evidence="2">
    <location>
        <begin position="607"/>
        <end position="612"/>
    </location>
    <ligand>
        <name>FAD</name>
        <dbReference type="ChEBI" id="CHEBI:57692"/>
    </ligand>
</feature>
<feature type="cross-link" description="Glycyl lysine isopeptide (Lys-Gly) (interchain with G-Cter in SUMO)" evidence="1">
    <location>
        <position position="287"/>
    </location>
</feature>
<feature type="cross-link" description="Glycyl lysine isopeptide (Lys-Gly) (interchain with G-Cter in SUMO)">
    <location>
        <position position="693"/>
    </location>
</feature>
<feature type="cross-link" description="Glycyl lysine isopeptide (Lys-Gly) (interchain with G-Cter in SUMO)">
    <location>
        <position position="770"/>
    </location>
</feature>
<feature type="sequence variant" description="In strain: cv. Lz-0.">
    <original>A</original>
    <variation>T</variation>
    <location>
        <position position="640"/>
    </location>
</feature>
<feature type="sequence variant" description="In strain: cv. Lz-0." evidence="6">
    <original>R</original>
    <variation>L</variation>
    <location>
        <position position="686"/>
    </location>
</feature>
<feature type="mutagenesis site" description="Loss of sumoylation; when associated with R-693 and R-770." evidence="6">
    <original>K</original>
    <variation>R</variation>
    <location>
        <position position="287"/>
    </location>
</feature>
<feature type="mutagenesis site" description="In sof1/fld-6; weak allele that suppresses the down-regulation of FLC by FCA." evidence="9">
    <original>P</original>
    <variation>L</variation>
    <location>
        <position position="428"/>
    </location>
</feature>
<feature type="mutagenesis site" description="Loss of sumoylation; when associated with R-287 and R-770." evidence="8">
    <original>K</original>
    <variation>R</variation>
    <location>
        <position position="693"/>
    </location>
</feature>
<feature type="mutagenesis site" description="Loss of sumoylation; when associated with R-287 and R-693." evidence="9">
    <original>K</original>
    <variation>R</variation>
    <location>
        <position position="770"/>
    </location>
</feature>
<keyword id="KW-0156">Chromatin regulator</keyword>
<keyword id="KW-0274">FAD</keyword>
<keyword id="KW-0285">Flavoprotein</keyword>
<keyword id="KW-1017">Isopeptide bond</keyword>
<keyword id="KW-0560">Oxidoreductase</keyword>
<keyword id="KW-1185">Reference proteome</keyword>
<keyword id="KW-0678">Repressor</keyword>
<keyword id="KW-0804">Transcription</keyword>
<keyword id="KW-0805">Transcription regulation</keyword>
<keyword id="KW-0832">Ubl conjugation</keyword>
<organism>
    <name type="scientific">Arabidopsis thaliana</name>
    <name type="common">Mouse-ear cress</name>
    <dbReference type="NCBI Taxonomy" id="3702"/>
    <lineage>
        <taxon>Eukaryota</taxon>
        <taxon>Viridiplantae</taxon>
        <taxon>Streptophyta</taxon>
        <taxon>Embryophyta</taxon>
        <taxon>Tracheophyta</taxon>
        <taxon>Spermatophyta</taxon>
        <taxon>Magnoliopsida</taxon>
        <taxon>eudicotyledons</taxon>
        <taxon>Gunneridae</taxon>
        <taxon>Pentapetalae</taxon>
        <taxon>rosids</taxon>
        <taxon>malvids</taxon>
        <taxon>Brassicales</taxon>
        <taxon>Brassicaceae</taxon>
        <taxon>Camelineae</taxon>
        <taxon>Arabidopsis</taxon>
    </lineage>
</organism>
<gene>
    <name evidence="13 14 15" type="primary">FLD</name>
    <name evidence="15" type="synonym">SOF1</name>
    <name evidence="17" type="ordered locus">At3g10390</name>
    <name evidence="19" type="ORF">F13M14.34</name>
    <name evidence="18" type="ORF">F14P13.1</name>
</gene>
<dbReference type="EC" id="1.-.-.-"/>
<dbReference type="EMBL" id="AY849996">
    <property type="protein sequence ID" value="AAX51266.1"/>
    <property type="molecule type" value="Genomic_DNA"/>
</dbReference>
<dbReference type="EMBL" id="AY849997">
    <property type="protein sequence ID" value="AAX51267.1"/>
    <property type="molecule type" value="Genomic_DNA"/>
</dbReference>
<dbReference type="EMBL" id="AC009400">
    <property type="protein sequence ID" value="AAF02805.1"/>
    <property type="status" value="ALT_INIT"/>
    <property type="molecule type" value="Genomic_DNA"/>
</dbReference>
<dbReference type="EMBL" id="AC011560">
    <property type="protein sequence ID" value="AAG51395.1"/>
    <property type="molecule type" value="Genomic_DNA"/>
</dbReference>
<dbReference type="EMBL" id="CP002686">
    <property type="protein sequence ID" value="AEE74899.1"/>
    <property type="status" value="ALT_SEQ"/>
    <property type="molecule type" value="Genomic_DNA"/>
</dbReference>
<dbReference type="EMBL" id="CP002686">
    <property type="protein sequence ID" value="ANM64276.1"/>
    <property type="molecule type" value="Genomic_DNA"/>
</dbReference>
<dbReference type="RefSeq" id="NP_001326316.1">
    <property type="nucleotide sequence ID" value="NM_001337874.1"/>
</dbReference>
<dbReference type="RefSeq" id="NP_187650.4">
    <property type="nucleotide sequence ID" value="NM_111874.4"/>
</dbReference>
<dbReference type="SMR" id="Q9CAE3"/>
<dbReference type="BioGRID" id="5536">
    <property type="interactions" value="2"/>
</dbReference>
<dbReference type="FunCoup" id="Q9CAE3">
    <property type="interactions" value="4080"/>
</dbReference>
<dbReference type="STRING" id="3702.Q9CAE3"/>
<dbReference type="iPTMnet" id="Q9CAE3"/>
<dbReference type="PaxDb" id="3702-AT3G10390.1"/>
<dbReference type="ProteomicsDB" id="230780"/>
<dbReference type="EnsemblPlants" id="AT3G10390.4">
    <property type="protein sequence ID" value="AT3G10390.4"/>
    <property type="gene ID" value="AT3G10390"/>
</dbReference>
<dbReference type="GeneID" id="820202"/>
<dbReference type="Gramene" id="AT3G10390.4">
    <property type="protein sequence ID" value="AT3G10390.4"/>
    <property type="gene ID" value="AT3G10390"/>
</dbReference>
<dbReference type="KEGG" id="ath:AT3G10390"/>
<dbReference type="Araport" id="AT3G10390"/>
<dbReference type="TAIR" id="AT3G10390">
    <property type="gene designation" value="FLD"/>
</dbReference>
<dbReference type="eggNOG" id="KOG0029">
    <property type="taxonomic scope" value="Eukaryota"/>
</dbReference>
<dbReference type="HOGENOM" id="CLU_004498_5_0_1"/>
<dbReference type="InParanoid" id="Q9CAE3"/>
<dbReference type="OMA" id="IRNHLLC"/>
<dbReference type="PhylomeDB" id="Q9CAE3"/>
<dbReference type="PRO" id="PR:Q9CAE3"/>
<dbReference type="Proteomes" id="UP000006548">
    <property type="component" value="Chromosome 3"/>
</dbReference>
<dbReference type="ExpressionAtlas" id="Q9CAE3">
    <property type="expression patterns" value="baseline and differential"/>
</dbReference>
<dbReference type="GO" id="GO:0016491">
    <property type="term" value="F:oxidoreductase activity"/>
    <property type="evidence" value="ECO:0007669"/>
    <property type="project" value="UniProtKB-KW"/>
</dbReference>
<dbReference type="GO" id="GO:0006325">
    <property type="term" value="P:chromatin organization"/>
    <property type="evidence" value="ECO:0007669"/>
    <property type="project" value="UniProtKB-KW"/>
</dbReference>
<dbReference type="GO" id="GO:2000028">
    <property type="term" value="P:regulation of photoperiodism, flowering"/>
    <property type="evidence" value="ECO:0000315"/>
    <property type="project" value="UniProtKB"/>
</dbReference>
<dbReference type="GO" id="GO:0048510">
    <property type="term" value="P:regulation of timing of transition from vegetative to reproductive phase"/>
    <property type="evidence" value="ECO:0000315"/>
    <property type="project" value="UniProtKB"/>
</dbReference>
<dbReference type="GO" id="GO:1904629">
    <property type="term" value="P:response to diterpene"/>
    <property type="evidence" value="ECO:0000315"/>
    <property type="project" value="UniProtKB"/>
</dbReference>
<dbReference type="GO" id="GO:0009627">
    <property type="term" value="P:systemic acquired resistance"/>
    <property type="evidence" value="ECO:0000315"/>
    <property type="project" value="UniProtKB"/>
</dbReference>
<dbReference type="GO" id="GO:0010228">
    <property type="term" value="P:vegetative to reproductive phase transition of meristem"/>
    <property type="evidence" value="ECO:0000315"/>
    <property type="project" value="TAIR"/>
</dbReference>
<dbReference type="FunFam" id="1.10.10.10:FF:000064">
    <property type="entry name" value="Lysine-specific histone demethylase 1A"/>
    <property type="match status" value="1"/>
</dbReference>
<dbReference type="Gene3D" id="3.90.660.10">
    <property type="match status" value="1"/>
</dbReference>
<dbReference type="Gene3D" id="3.50.50.60">
    <property type="entry name" value="FAD/NAD(P)-binding domain"/>
    <property type="match status" value="1"/>
</dbReference>
<dbReference type="Gene3D" id="1.10.10.10">
    <property type="entry name" value="Winged helix-like DNA-binding domain superfamily/Winged helix DNA-binding domain"/>
    <property type="match status" value="1"/>
</dbReference>
<dbReference type="InterPro" id="IPR002937">
    <property type="entry name" value="Amino_oxidase"/>
</dbReference>
<dbReference type="InterPro" id="IPR036188">
    <property type="entry name" value="FAD/NAD-bd_sf"/>
</dbReference>
<dbReference type="InterPro" id="IPR050281">
    <property type="entry name" value="Flavin_monoamine_oxidase"/>
</dbReference>
<dbReference type="InterPro" id="IPR009057">
    <property type="entry name" value="Homeodomain-like_sf"/>
</dbReference>
<dbReference type="InterPro" id="IPR007526">
    <property type="entry name" value="SWIRM"/>
</dbReference>
<dbReference type="InterPro" id="IPR036388">
    <property type="entry name" value="WH-like_DNA-bd_sf"/>
</dbReference>
<dbReference type="PANTHER" id="PTHR10742">
    <property type="entry name" value="FLAVIN MONOAMINE OXIDASE"/>
    <property type="match status" value="1"/>
</dbReference>
<dbReference type="PANTHER" id="PTHR10742:SF260">
    <property type="entry name" value="PROTEIN FLOWERING LOCUS D"/>
    <property type="match status" value="1"/>
</dbReference>
<dbReference type="Pfam" id="PF01593">
    <property type="entry name" value="Amino_oxidase"/>
    <property type="match status" value="1"/>
</dbReference>
<dbReference type="Pfam" id="PF04433">
    <property type="entry name" value="SWIRM"/>
    <property type="match status" value="1"/>
</dbReference>
<dbReference type="SUPFAM" id="SSF54373">
    <property type="entry name" value="FAD-linked reductases, C-terminal domain"/>
    <property type="match status" value="1"/>
</dbReference>
<dbReference type="SUPFAM" id="SSF51905">
    <property type="entry name" value="FAD/NAD(P)-binding domain"/>
    <property type="match status" value="1"/>
</dbReference>
<dbReference type="SUPFAM" id="SSF46689">
    <property type="entry name" value="Homeodomain-like"/>
    <property type="match status" value="1"/>
</dbReference>
<dbReference type="PROSITE" id="PS50934">
    <property type="entry name" value="SWIRM"/>
    <property type="match status" value="1"/>
</dbReference>
<protein>
    <recommendedName>
        <fullName evidence="13 14 15">Protein FLOWERING LOCUS D</fullName>
        <ecNumber>1.-.-.-</ecNumber>
    </recommendedName>
    <alternativeName>
        <fullName evidence="15">Protein SUPPRESSOR OF OVEREXPRESSED FCA 1</fullName>
    </alternativeName>
</protein>